<organism>
    <name type="scientific">Alcaligenes xylosoxydans xylosoxydans</name>
    <name type="common">Achromobacter xylosoxidans</name>
    <dbReference type="NCBI Taxonomy" id="85698"/>
    <lineage>
        <taxon>Bacteria</taxon>
        <taxon>Pseudomonadati</taxon>
        <taxon>Pseudomonadota</taxon>
        <taxon>Betaproteobacteria</taxon>
        <taxon>Burkholderiales</taxon>
        <taxon>Alcaligenaceae</taxon>
        <taxon>Achromobacter</taxon>
    </lineage>
</organism>
<accession>P81445</accession>
<gene>
    <name type="primary">nirK</name>
</gene>
<reference key="1">
    <citation type="journal article" date="1997" name="Acta Crystallogr. D">
        <title>Structures of a blue-copper nitrite reductase and its substrate-bound complex.</title>
        <authorList>
            <person name="Dodd F.E."/>
            <person name="Hasnain S.S."/>
            <person name="Abraham Z.H.L."/>
            <person name="Eady R.R."/>
            <person name="Smith B.E."/>
        </authorList>
    </citation>
    <scope>X-RAY CRYSTALLOGRAPHY (2.8 ANGSTROMS)</scope>
    <source>
        <strain>LMG 1865 / CCUG 61957 / NCIMB 11015 / Iwasaki</strain>
    </source>
</reference>
<reference key="2">
    <citation type="journal article" date="1993" name="Biochem. J.">
        <title>Purification and characterization of the dissimilatory nitrite reductase from Alcaligenes xylosoxidans subsp. xylosoxidans (N.C.I.M.B. 11015): evidence for the presence of both type 1 and type 2 copper centres.</title>
        <authorList>
            <person name="Abraham Z.H.L."/>
            <person name="Lowe D.J."/>
            <person name="Smith B.E."/>
        </authorList>
    </citation>
    <scope>CHARACTERIZATION</scope>
    <source>
        <strain>LMG 1865 / CCUG 61957 / NCIMB 11015 / Iwasaki</strain>
    </source>
</reference>
<sequence length="330" mass="34413">GLPRVAVDLVAPPLVHPHSQVAAGAPKVVQFRMSIEEKKMVADDDGTTAQAMTFNGSVPGPTLVVHEGDYIELTLVNPATNSMPHNVDFHAATGALGGAGLTQVVPGQEAVLRFKADRSGTFVYHCAPAGMVPWHVVSGMNGALMVLPRDGLRDAAGAALAYDRVYTIGESDLYVPKAADGNYSDYPALASAYADTVAVMRTLTPSHAVFNGAVGALTGANALTAAVGESVLIIHSQANRDSRPHLIGGHGDWVWTTGKFANPPQLNMETWFIPGGSAAAALYTFKQPGTYAYLSHNLIEAMELGAAAQASVEGQWDDDLMTSVAAPGPA</sequence>
<dbReference type="EC" id="1.7.2.1"/>
<dbReference type="PDB" id="1NDR">
    <property type="method" value="X-ray"/>
    <property type="resolution" value="3.00 A"/>
    <property type="chains" value="A/B/C=1-329"/>
</dbReference>
<dbReference type="PDB" id="1NDS">
    <property type="method" value="X-ray"/>
    <property type="resolution" value="2.80 A"/>
    <property type="chains" value="A/B/C=1-329"/>
</dbReference>
<dbReference type="PDBsum" id="1NDR"/>
<dbReference type="PDBsum" id="1NDS"/>
<dbReference type="SMR" id="P81445"/>
<dbReference type="SABIO-RK" id="P81445"/>
<dbReference type="UniPathway" id="UPA00652">
    <property type="reaction ID" value="UER00707"/>
</dbReference>
<dbReference type="EvolutionaryTrace" id="P81445"/>
<dbReference type="GO" id="GO:0042597">
    <property type="term" value="C:periplasmic space"/>
    <property type="evidence" value="ECO:0007669"/>
    <property type="project" value="UniProtKB-SubCell"/>
</dbReference>
<dbReference type="GO" id="GO:0005507">
    <property type="term" value="F:copper ion binding"/>
    <property type="evidence" value="ECO:0007669"/>
    <property type="project" value="InterPro"/>
</dbReference>
<dbReference type="GO" id="GO:0050421">
    <property type="term" value="F:nitrite reductase (NO-forming) activity"/>
    <property type="evidence" value="ECO:0007669"/>
    <property type="project" value="UniProtKB-EC"/>
</dbReference>
<dbReference type="GO" id="GO:0019333">
    <property type="term" value="P:denitrification pathway"/>
    <property type="evidence" value="ECO:0007669"/>
    <property type="project" value="UniProtKB-UniPathway"/>
</dbReference>
<dbReference type="GO" id="GO:0042128">
    <property type="term" value="P:nitrate assimilation"/>
    <property type="evidence" value="ECO:0007669"/>
    <property type="project" value="UniProtKB-KW"/>
</dbReference>
<dbReference type="CDD" id="cd11020">
    <property type="entry name" value="CuRO_1_CuNIR"/>
    <property type="match status" value="1"/>
</dbReference>
<dbReference type="CDD" id="cd04208">
    <property type="entry name" value="CuRO_2_CuNIR"/>
    <property type="match status" value="1"/>
</dbReference>
<dbReference type="Gene3D" id="2.60.40.420">
    <property type="entry name" value="Cupredoxins - blue copper proteins"/>
    <property type="match status" value="2"/>
</dbReference>
<dbReference type="InterPro" id="IPR011707">
    <property type="entry name" value="Cu-oxidase-like_N"/>
</dbReference>
<dbReference type="InterPro" id="IPR001117">
    <property type="entry name" value="Cu-oxidase_2nd"/>
</dbReference>
<dbReference type="InterPro" id="IPR045087">
    <property type="entry name" value="Cu-oxidase_fam"/>
</dbReference>
<dbReference type="InterPro" id="IPR008972">
    <property type="entry name" value="Cupredoxin"/>
</dbReference>
<dbReference type="InterPro" id="IPR001287">
    <property type="entry name" value="NO2-reductase_Cu"/>
</dbReference>
<dbReference type="NCBIfam" id="TIGR02376">
    <property type="entry name" value="Cu_nitrite_red"/>
    <property type="match status" value="1"/>
</dbReference>
<dbReference type="PANTHER" id="PTHR11709:SF394">
    <property type="entry name" value="FI03373P-RELATED"/>
    <property type="match status" value="1"/>
</dbReference>
<dbReference type="PANTHER" id="PTHR11709">
    <property type="entry name" value="MULTI-COPPER OXIDASE"/>
    <property type="match status" value="1"/>
</dbReference>
<dbReference type="Pfam" id="PF00394">
    <property type="entry name" value="Cu-oxidase"/>
    <property type="match status" value="1"/>
</dbReference>
<dbReference type="Pfam" id="PF07732">
    <property type="entry name" value="Cu-oxidase_3"/>
    <property type="match status" value="1"/>
</dbReference>
<dbReference type="PRINTS" id="PR00695">
    <property type="entry name" value="CUNO2RDTASE"/>
</dbReference>
<dbReference type="SUPFAM" id="SSF49503">
    <property type="entry name" value="Cupredoxins"/>
    <property type="match status" value="2"/>
</dbReference>
<comment type="catalytic activity">
    <reaction>
        <text>nitric oxide + Fe(III)-[cytochrome c] + H2O = Fe(II)-[cytochrome c] + nitrite + 2 H(+)</text>
        <dbReference type="Rhea" id="RHEA:15233"/>
        <dbReference type="Rhea" id="RHEA-COMP:10350"/>
        <dbReference type="Rhea" id="RHEA-COMP:14399"/>
        <dbReference type="ChEBI" id="CHEBI:15377"/>
        <dbReference type="ChEBI" id="CHEBI:15378"/>
        <dbReference type="ChEBI" id="CHEBI:16301"/>
        <dbReference type="ChEBI" id="CHEBI:16480"/>
        <dbReference type="ChEBI" id="CHEBI:29033"/>
        <dbReference type="ChEBI" id="CHEBI:29034"/>
        <dbReference type="EC" id="1.7.2.1"/>
    </reaction>
</comment>
<comment type="cofactor">
    <cofactor>
        <name>Cu(2+)</name>
        <dbReference type="ChEBI" id="CHEBI:29036"/>
    </cofactor>
    <text>Binds 1 Cu(2+) ion. The Cu(2+) ion is held by residues from each of 2 monomers of the trimer. Nitrite is bound to the Cu(2+) ion site. Pseudoazurin is the physiological electron donor for the Cu-NIR in vitro.</text>
</comment>
<comment type="cofactor">
    <cofactor>
        <name>Cu(+)</name>
        <dbReference type="ChEBI" id="CHEBI:49552"/>
    </cofactor>
    <text>Binds 1 Cu(+) ion. The Cu(+) ion is bound within a single monomer.</text>
</comment>
<comment type="cofactor">
    <cofactor>
        <name>FAD</name>
        <dbReference type="ChEBI" id="CHEBI:57692"/>
    </cofactor>
</comment>
<comment type="pathway">
    <text>Nitrogen metabolism; nitrate reduction (denitrification); dinitrogen from nitrate: step 2/4.</text>
</comment>
<comment type="subunit">
    <text>Homotrimer.</text>
</comment>
<comment type="subcellular location">
    <subcellularLocation>
        <location evidence="1">Periplasm</location>
    </subcellularLocation>
</comment>
<comment type="domain">
    <text>The type I copper site in NIR plays a crucial role for electron transfer from pseudoazurin to the type II copper site of NIR, which comprises the catalytic center of NIR for the reduction of nitrite.</text>
</comment>
<comment type="similarity">
    <text evidence="2">Belongs to the multicopper oxidase family.</text>
</comment>
<keyword id="KW-0002">3D-structure</keyword>
<keyword id="KW-0186">Copper</keyword>
<keyword id="KW-0274">FAD</keyword>
<keyword id="KW-0285">Flavoprotein</keyword>
<keyword id="KW-0479">Metal-binding</keyword>
<keyword id="KW-0534">Nitrate assimilation</keyword>
<keyword id="KW-0560">Oxidoreductase</keyword>
<keyword id="KW-0574">Periplasm</keyword>
<keyword id="KW-0677">Repeat</keyword>
<evidence type="ECO:0000250" key="1"/>
<evidence type="ECO:0000305" key="2"/>
<name>NIR_ALCXX</name>
<proteinExistence type="evidence at protein level"/>
<feature type="chain" id="PRO_0000085586" description="Copper-containing nitrite reductase">
    <location>
        <begin position="1"/>
        <end position="330"/>
    </location>
</feature>
<feature type="domain" description="Plastocyanin-like 1">
    <location>
        <begin position="1"/>
        <end position="165"/>
    </location>
</feature>
<feature type="domain" description="Plastocyanin-like 2">
    <location>
        <begin position="166"/>
        <end position="330"/>
    </location>
</feature>
<feature type="binding site" description="type 1 copper site">
    <location>
        <position position="85"/>
    </location>
    <ligand>
        <name>Cu cation</name>
        <dbReference type="ChEBI" id="CHEBI:23378"/>
        <label>1</label>
    </ligand>
</feature>
<feature type="binding site" description="type 2 copper site">
    <location>
        <position position="90"/>
    </location>
    <ligand>
        <name>Cu cation</name>
        <dbReference type="ChEBI" id="CHEBI:23378"/>
        <label>2</label>
    </ligand>
</feature>
<feature type="binding site" description="type 2 copper site">
    <location>
        <position position="125"/>
    </location>
    <ligand>
        <name>Cu cation</name>
        <dbReference type="ChEBI" id="CHEBI:23378"/>
        <label>2</label>
    </ligand>
</feature>
<feature type="binding site" description="type 1 copper site">
    <location>
        <position position="126"/>
    </location>
    <ligand>
        <name>Cu cation</name>
        <dbReference type="ChEBI" id="CHEBI:23378"/>
        <label>1</label>
    </ligand>
</feature>
<feature type="binding site" description="type 1 copper site">
    <location>
        <position position="135"/>
    </location>
    <ligand>
        <name>Cu cation</name>
        <dbReference type="ChEBI" id="CHEBI:23378"/>
        <label>1</label>
    </ligand>
</feature>
<feature type="binding site" description="type 1 copper site">
    <location>
        <position position="140"/>
    </location>
    <ligand>
        <name>Cu cation</name>
        <dbReference type="ChEBI" id="CHEBI:23378"/>
        <label>1</label>
    </ligand>
</feature>
<feature type="binding site" description="type 2 copper site">
    <location>
        <position position="296"/>
    </location>
    <ligand>
        <name>Cu cation</name>
        <dbReference type="ChEBI" id="CHEBI:23378"/>
        <label>2</label>
    </ligand>
</feature>
<protein>
    <recommendedName>
        <fullName>Copper-containing nitrite reductase</fullName>
        <ecNumber>1.7.2.1</ecNumber>
    </recommendedName>
    <alternativeName>
        <fullName>Cu-NIR</fullName>
    </alternativeName>
</protein>